<name>ADH2_YARLI</name>
<accession>F2Z678</accession>
<evidence type="ECO:0000250" key="1"/>
<evidence type="ECO:0000269" key="2">
    <source ref="2"/>
</evidence>
<evidence type="ECO:0000305" key="3"/>
<comment type="function">
    <text evidence="2">Versatile oxidoreductase that catalyzes the oxidation and reduction of a broad range of substrates. Preferentially oxidizes secondary alcohols. Has highest activity for racemic 2-octanol. Is also an efficient reductase for selected substrates. Substrate selectivity was found for medium chain lipophilic ketones. Has highest activities for 2-octanone, 2-nonanone and 2-decanone. The enzyme is (S)-selective in the reduction direction and produces exclusively the (S)-enantiomer.</text>
</comment>
<comment type="catalytic activity">
    <reaction evidence="2">
        <text>a secondary alcohol + NAD(+) = a ketone + NADH + H(+)</text>
        <dbReference type="Rhea" id="RHEA:10740"/>
        <dbReference type="ChEBI" id="CHEBI:15378"/>
        <dbReference type="ChEBI" id="CHEBI:17087"/>
        <dbReference type="ChEBI" id="CHEBI:35681"/>
        <dbReference type="ChEBI" id="CHEBI:57540"/>
        <dbReference type="ChEBI" id="CHEBI:57945"/>
        <dbReference type="EC" id="1.1.1.1"/>
    </reaction>
</comment>
<comment type="cofactor">
    <cofactor evidence="1">
        <name>Zn(2+)</name>
        <dbReference type="ChEBI" id="CHEBI:29105"/>
    </cofactor>
    <text evidence="1">Binds 2 Zn(2+) ions per subunit.</text>
</comment>
<comment type="biophysicochemical properties">
    <kinetics>
        <KM evidence="2">1.42 mM for (S)-2-octanol</KM>
        <KM evidence="2">5.38 mM for (2)-octanone</KM>
        <KM evidence="2">17.8 mM for NAD(+)</KM>
        <text>kcat is 1.05 sec(-1) with (S)-2-octanol as substrate and 3.42 sec(-1) for NAD(+). kcat is 0.56 sec(-1) for (2)-octanone.</text>
    </kinetics>
    <phDependence>
        <text evidence="2">Optimum pH is 9.5 for the oxidation reaction, and 6.5 for the reduction reaction.</text>
    </phDependence>
    <temperatureDependence>
        <text evidence="2">Optimum temperature is 28-33 degrees Celsius. Active from 22 to 37 degrees Celsius.</text>
    </temperatureDependence>
</comment>
<comment type="subunit">
    <text evidence="1">Homotetramer.</text>
</comment>
<comment type="similarity">
    <text evidence="3">Belongs to the zinc-containing alcohol dehydrogenase family.</text>
</comment>
<gene>
    <name type="primary">ADH2</name>
    <name type="ordered locus">YALI0E17787g</name>
</gene>
<proteinExistence type="evidence at protein level"/>
<sequence>MSAPVIPKTQKGVIFETSGGPLMYKDIPVPVPADDEILVNVKFSGVCHTDLHAWKGDWPLDTKLPLVGGHEGAGVVVAKGKNVDTFEIGDYAGIKWINKACYTCEFCQVAAEPNCPNATMSGYTHDGSFQQYATANAVQAAHIPKNCDLAEIAPILCAGITVYKALKTAAILAGQWVAVTGAGGGLGTLAVQYAKAMGYRVLAIDTGADKEKMCKDLGAEVFIDFAKTKDLVKDVQEATKGGPHAVINVSVSEFAVNQSIEYVRTLGTVVLVGLPAGAVCKSPIFQQVARSIQIKGSYVGNRADSQEAIEFFSRGLVKSPIIIIGLSELEKVYKLMEEGKIAGRYVLDTSK</sequence>
<organism>
    <name type="scientific">Yarrowia lipolytica (strain CLIB 122 / E 150)</name>
    <name type="common">Yeast</name>
    <name type="synonym">Candida lipolytica</name>
    <dbReference type="NCBI Taxonomy" id="284591"/>
    <lineage>
        <taxon>Eukaryota</taxon>
        <taxon>Fungi</taxon>
        <taxon>Dikarya</taxon>
        <taxon>Ascomycota</taxon>
        <taxon>Saccharomycotina</taxon>
        <taxon>Dipodascomycetes</taxon>
        <taxon>Dipodascales</taxon>
        <taxon>Dipodascales incertae sedis</taxon>
        <taxon>Yarrowia</taxon>
    </lineage>
</organism>
<protein>
    <recommendedName>
        <fullName>Alcohol dehydrogenase 2</fullName>
        <ecNumber>1.1.1.1</ecNumber>
    </recommendedName>
</protein>
<reference key="1">
    <citation type="journal article" date="2004" name="Nature">
        <title>Genome evolution in yeasts.</title>
        <authorList>
            <person name="Dujon B."/>
            <person name="Sherman D."/>
            <person name="Fischer G."/>
            <person name="Durrens P."/>
            <person name="Casaregola S."/>
            <person name="Lafontaine I."/>
            <person name="de Montigny J."/>
            <person name="Marck C."/>
            <person name="Neuveglise C."/>
            <person name="Talla E."/>
            <person name="Goffard N."/>
            <person name="Frangeul L."/>
            <person name="Aigle M."/>
            <person name="Anthouard V."/>
            <person name="Babour A."/>
            <person name="Barbe V."/>
            <person name="Barnay S."/>
            <person name="Blanchin S."/>
            <person name="Beckerich J.-M."/>
            <person name="Beyne E."/>
            <person name="Bleykasten C."/>
            <person name="Boisrame A."/>
            <person name="Boyer J."/>
            <person name="Cattolico L."/>
            <person name="Confanioleri F."/>
            <person name="de Daruvar A."/>
            <person name="Despons L."/>
            <person name="Fabre E."/>
            <person name="Fairhead C."/>
            <person name="Ferry-Dumazet H."/>
            <person name="Groppi A."/>
            <person name="Hantraye F."/>
            <person name="Hennequin C."/>
            <person name="Jauniaux N."/>
            <person name="Joyet P."/>
            <person name="Kachouri R."/>
            <person name="Kerrest A."/>
            <person name="Koszul R."/>
            <person name="Lemaire M."/>
            <person name="Lesur I."/>
            <person name="Ma L."/>
            <person name="Muller H."/>
            <person name="Nicaud J.-M."/>
            <person name="Nikolski M."/>
            <person name="Oztas S."/>
            <person name="Ozier-Kalogeropoulos O."/>
            <person name="Pellenz S."/>
            <person name="Potier S."/>
            <person name="Richard G.-F."/>
            <person name="Straub M.-L."/>
            <person name="Suleau A."/>
            <person name="Swennen D."/>
            <person name="Tekaia F."/>
            <person name="Wesolowski-Louvel M."/>
            <person name="Westhof E."/>
            <person name="Wirth B."/>
            <person name="Zeniou-Meyer M."/>
            <person name="Zivanovic Y."/>
            <person name="Bolotin-Fukuhara M."/>
            <person name="Thierry A."/>
            <person name="Bouchier C."/>
            <person name="Caudron B."/>
            <person name="Scarpelli C."/>
            <person name="Gaillardin C."/>
            <person name="Weissenbach J."/>
            <person name="Wincker P."/>
            <person name="Souciet J.-L."/>
        </authorList>
    </citation>
    <scope>NUCLEOTIDE SEQUENCE [LARGE SCALE GENOMIC DNA]</scope>
    <source>
        <strain>CLIB 122 / E 150</strain>
    </source>
</reference>
<reference key="2">
    <citation type="journal article" date="2013" name="Biomolecules">
        <title>Enantiocomplementary Yarrowia lipolytica oxidoreductases: Alcohol dehydrogenase 2 and short chain dehydrogenase/reductase.</title>
        <authorList>
            <person name="Napora-Wijata K."/>
            <person name="Strohmeier G.A."/>
            <person name="Sonavane M.N."/>
            <person name="Avi M."/>
            <person name="Robins K."/>
            <person name="Winkler M."/>
        </authorList>
    </citation>
    <scope>FUNCTION</scope>
    <scope>CATALYTIC ACTIVITY</scope>
    <scope>BIOPHYSICOCHEMICAL PROPERTIES</scope>
    <source>
        <strain>CLIB 122 / E 150</strain>
    </source>
</reference>
<keyword id="KW-0479">Metal-binding</keyword>
<keyword id="KW-0520">NAD</keyword>
<keyword id="KW-0560">Oxidoreductase</keyword>
<keyword id="KW-1185">Reference proteome</keyword>
<keyword id="KW-0862">Zinc</keyword>
<dbReference type="EC" id="1.1.1.1"/>
<dbReference type="EMBL" id="CR382131">
    <property type="protein sequence ID" value="CAG79670.1"/>
    <property type="molecule type" value="Genomic_DNA"/>
</dbReference>
<dbReference type="RefSeq" id="XP_504077.1">
    <property type="nucleotide sequence ID" value="XM_504077.1"/>
</dbReference>
<dbReference type="SMR" id="F2Z678"/>
<dbReference type="FunCoup" id="F2Z678">
    <property type="interactions" value="938"/>
</dbReference>
<dbReference type="STRING" id="284591.F2Z678"/>
<dbReference type="EnsemblFungi" id="CAG79670">
    <property type="protein sequence ID" value="CAG79670"/>
    <property type="gene ID" value="YALI0_E17787g"/>
</dbReference>
<dbReference type="KEGG" id="yli:2912417"/>
<dbReference type="VEuPathDB" id="FungiDB:YALI0_E17787g"/>
<dbReference type="HOGENOM" id="CLU_026673_20_1_1"/>
<dbReference type="InParanoid" id="F2Z678"/>
<dbReference type="OMA" id="AWFYDAC"/>
<dbReference type="OrthoDB" id="109956at4891"/>
<dbReference type="Proteomes" id="UP000001300">
    <property type="component" value="Chromosome E"/>
</dbReference>
<dbReference type="GO" id="GO:0005737">
    <property type="term" value="C:cytoplasm"/>
    <property type="evidence" value="ECO:0000318"/>
    <property type="project" value="GO_Central"/>
</dbReference>
<dbReference type="GO" id="GO:0004022">
    <property type="term" value="F:alcohol dehydrogenase (NAD+) activity"/>
    <property type="evidence" value="ECO:0000318"/>
    <property type="project" value="GO_Central"/>
</dbReference>
<dbReference type="GO" id="GO:0008270">
    <property type="term" value="F:zinc ion binding"/>
    <property type="evidence" value="ECO:0007669"/>
    <property type="project" value="InterPro"/>
</dbReference>
<dbReference type="CDD" id="cd08297">
    <property type="entry name" value="CAD3"/>
    <property type="match status" value="1"/>
</dbReference>
<dbReference type="FunFam" id="3.40.50.720:FF:000039">
    <property type="entry name" value="Alcohol dehydrogenase AdhP"/>
    <property type="match status" value="1"/>
</dbReference>
<dbReference type="FunFam" id="3.90.180.10:FF:000002">
    <property type="entry name" value="Alcohol dehydrogenase AdhP"/>
    <property type="match status" value="1"/>
</dbReference>
<dbReference type="Gene3D" id="3.90.180.10">
    <property type="entry name" value="Medium-chain alcohol dehydrogenases, catalytic domain"/>
    <property type="match status" value="1"/>
</dbReference>
<dbReference type="Gene3D" id="3.40.50.720">
    <property type="entry name" value="NAD(P)-binding Rossmann-like Domain"/>
    <property type="match status" value="1"/>
</dbReference>
<dbReference type="InterPro" id="IPR013149">
    <property type="entry name" value="ADH-like_C"/>
</dbReference>
<dbReference type="InterPro" id="IPR013154">
    <property type="entry name" value="ADH-like_N"/>
</dbReference>
<dbReference type="InterPro" id="IPR002328">
    <property type="entry name" value="ADH_Zn_CS"/>
</dbReference>
<dbReference type="InterPro" id="IPR011032">
    <property type="entry name" value="GroES-like_sf"/>
</dbReference>
<dbReference type="InterPro" id="IPR036291">
    <property type="entry name" value="NAD(P)-bd_dom_sf"/>
</dbReference>
<dbReference type="InterPro" id="IPR020843">
    <property type="entry name" value="PKS_ER"/>
</dbReference>
<dbReference type="PANTHER" id="PTHR42940">
    <property type="entry name" value="ALCOHOL DEHYDROGENASE 1-RELATED"/>
    <property type="match status" value="1"/>
</dbReference>
<dbReference type="PANTHER" id="PTHR42940:SF3">
    <property type="entry name" value="ALCOHOL DEHYDROGENASE 1-RELATED"/>
    <property type="match status" value="1"/>
</dbReference>
<dbReference type="Pfam" id="PF08240">
    <property type="entry name" value="ADH_N"/>
    <property type="match status" value="1"/>
</dbReference>
<dbReference type="Pfam" id="PF00107">
    <property type="entry name" value="ADH_zinc_N"/>
    <property type="match status" value="1"/>
</dbReference>
<dbReference type="SMART" id="SM00829">
    <property type="entry name" value="PKS_ER"/>
    <property type="match status" value="1"/>
</dbReference>
<dbReference type="SUPFAM" id="SSF50129">
    <property type="entry name" value="GroES-like"/>
    <property type="match status" value="1"/>
</dbReference>
<dbReference type="SUPFAM" id="SSF51735">
    <property type="entry name" value="NAD(P)-binding Rossmann-fold domains"/>
    <property type="match status" value="1"/>
</dbReference>
<dbReference type="PROSITE" id="PS00059">
    <property type="entry name" value="ADH_ZINC"/>
    <property type="match status" value="1"/>
</dbReference>
<feature type="chain" id="PRO_0000425281" description="Alcohol dehydrogenase 2">
    <location>
        <begin position="1"/>
        <end position="351"/>
    </location>
</feature>
<feature type="binding site" evidence="1">
    <location>
        <position position="47"/>
    </location>
    <ligand>
        <name>Zn(2+)</name>
        <dbReference type="ChEBI" id="CHEBI:29105"/>
        <label>1</label>
        <note>catalytic</note>
    </ligand>
</feature>
<feature type="binding site" evidence="1">
    <location>
        <position position="70"/>
    </location>
    <ligand>
        <name>Zn(2+)</name>
        <dbReference type="ChEBI" id="CHEBI:29105"/>
        <label>1</label>
        <note>catalytic</note>
    </ligand>
</feature>
<feature type="binding site" evidence="1">
    <location>
        <position position="101"/>
    </location>
    <ligand>
        <name>Zn(2+)</name>
        <dbReference type="ChEBI" id="CHEBI:29105"/>
        <label>2</label>
    </ligand>
</feature>
<feature type="binding site" evidence="1">
    <location>
        <position position="104"/>
    </location>
    <ligand>
        <name>Zn(2+)</name>
        <dbReference type="ChEBI" id="CHEBI:29105"/>
        <label>2</label>
    </ligand>
</feature>
<feature type="binding site" evidence="1">
    <location>
        <position position="107"/>
    </location>
    <ligand>
        <name>Zn(2+)</name>
        <dbReference type="ChEBI" id="CHEBI:29105"/>
        <label>2</label>
    </ligand>
</feature>
<feature type="binding site" evidence="1">
    <location>
        <position position="115"/>
    </location>
    <ligand>
        <name>Zn(2+)</name>
        <dbReference type="ChEBI" id="CHEBI:29105"/>
        <label>2</label>
    </ligand>
</feature>
<feature type="binding site" evidence="1">
    <location>
        <position position="157"/>
    </location>
    <ligand>
        <name>Zn(2+)</name>
        <dbReference type="ChEBI" id="CHEBI:29105"/>
        <label>1</label>
        <note>catalytic</note>
    </ligand>
</feature>
<feature type="binding site" evidence="1">
    <location>
        <begin position="181"/>
        <end position="187"/>
    </location>
    <ligand>
        <name>NAD(+)</name>
        <dbReference type="ChEBI" id="CHEBI:57540"/>
    </ligand>
</feature>
<feature type="binding site" evidence="1">
    <location>
        <position position="205"/>
    </location>
    <ligand>
        <name>NAD(+)</name>
        <dbReference type="ChEBI" id="CHEBI:57540"/>
    </ligand>
</feature>
<feature type="binding site" evidence="1">
    <location>
        <position position="210"/>
    </location>
    <ligand>
        <name>NAD(+)</name>
        <dbReference type="ChEBI" id="CHEBI:57540"/>
    </ligand>
</feature>
<feature type="binding site" evidence="1">
    <location>
        <begin position="272"/>
        <end position="274"/>
    </location>
    <ligand>
        <name>NAD(+)</name>
        <dbReference type="ChEBI" id="CHEBI:57540"/>
    </ligand>
</feature>
<feature type="binding site" evidence="1">
    <location>
        <position position="344"/>
    </location>
    <ligand>
        <name>NAD(+)</name>
        <dbReference type="ChEBI" id="CHEBI:57540"/>
    </ligand>
</feature>